<dbReference type="EMBL" id="CR382132">
    <property type="protein sequence ID" value="CAG78862.1"/>
    <property type="molecule type" value="Genomic_DNA"/>
</dbReference>
<dbReference type="RefSeq" id="XP_506049.1">
    <property type="nucleotide sequence ID" value="XM_506049.1"/>
</dbReference>
<dbReference type="SMR" id="Q6BZW3"/>
<dbReference type="FunCoup" id="Q6BZW3">
    <property type="interactions" value="119"/>
</dbReference>
<dbReference type="STRING" id="284591.Q6BZW3"/>
<dbReference type="EnsemblFungi" id="CAG78862">
    <property type="protein sequence ID" value="CAG78862"/>
    <property type="gene ID" value="YALI0_F30415g"/>
</dbReference>
<dbReference type="KEGG" id="yli:2907917"/>
<dbReference type="VEuPathDB" id="FungiDB:YALI0_F30415g"/>
<dbReference type="HOGENOM" id="CLU_029663_1_2_1"/>
<dbReference type="InParanoid" id="Q6BZW3"/>
<dbReference type="OMA" id="WLCNWQV"/>
<dbReference type="OrthoDB" id="1624at4891"/>
<dbReference type="Proteomes" id="UP000001300">
    <property type="component" value="Chromosome F"/>
</dbReference>
<dbReference type="GO" id="GO:0000324">
    <property type="term" value="C:fungal-type vacuole"/>
    <property type="evidence" value="ECO:0007669"/>
    <property type="project" value="EnsemblFungi"/>
</dbReference>
<dbReference type="GO" id="GO:0005774">
    <property type="term" value="C:vacuolar membrane"/>
    <property type="evidence" value="ECO:0007669"/>
    <property type="project" value="UniProtKB-SubCell"/>
</dbReference>
<dbReference type="GO" id="GO:0005773">
    <property type="term" value="C:vacuole"/>
    <property type="evidence" value="ECO:0000318"/>
    <property type="project" value="GO_Central"/>
</dbReference>
<dbReference type="GO" id="GO:0022857">
    <property type="term" value="F:transmembrane transporter activity"/>
    <property type="evidence" value="ECO:0007669"/>
    <property type="project" value="InterPro"/>
</dbReference>
<dbReference type="GO" id="GO:1903826">
    <property type="term" value="P:L-arginine transmembrane transport"/>
    <property type="evidence" value="ECO:0007669"/>
    <property type="project" value="EnsemblFungi"/>
</dbReference>
<dbReference type="GO" id="GO:0015819">
    <property type="term" value="P:lysine transport"/>
    <property type="evidence" value="ECO:0007669"/>
    <property type="project" value="EnsemblFungi"/>
</dbReference>
<dbReference type="GO" id="GO:0051453">
    <property type="term" value="P:regulation of intracellular pH"/>
    <property type="evidence" value="ECO:0000318"/>
    <property type="project" value="GO_Central"/>
</dbReference>
<dbReference type="FunFam" id="1.20.1250.20:FF:000981">
    <property type="entry name" value="Protein BTN"/>
    <property type="match status" value="1"/>
</dbReference>
<dbReference type="Gene3D" id="1.20.1250.20">
    <property type="entry name" value="MFS general substrate transporter like domains"/>
    <property type="match status" value="1"/>
</dbReference>
<dbReference type="InterPro" id="IPR003492">
    <property type="entry name" value="Battenin_disease_Cln3"/>
</dbReference>
<dbReference type="InterPro" id="IPR018460">
    <property type="entry name" value="Battenin_disease_Cln3_subgr"/>
</dbReference>
<dbReference type="InterPro" id="IPR020846">
    <property type="entry name" value="MFS_dom"/>
</dbReference>
<dbReference type="InterPro" id="IPR036259">
    <property type="entry name" value="MFS_trans_sf"/>
</dbReference>
<dbReference type="PANTHER" id="PTHR10981">
    <property type="entry name" value="BATTENIN"/>
    <property type="match status" value="1"/>
</dbReference>
<dbReference type="PANTHER" id="PTHR10981:SF0">
    <property type="entry name" value="BATTENIN"/>
    <property type="match status" value="1"/>
</dbReference>
<dbReference type="Pfam" id="PF02487">
    <property type="entry name" value="CLN3"/>
    <property type="match status" value="1"/>
</dbReference>
<dbReference type="PIRSF" id="PIRSF015974">
    <property type="entry name" value="CLN3_BTN1"/>
    <property type="match status" value="1"/>
</dbReference>
<dbReference type="PRINTS" id="PR01315">
    <property type="entry name" value="BATTENIN"/>
</dbReference>
<dbReference type="SUPFAM" id="SSF103473">
    <property type="entry name" value="MFS general substrate transporter"/>
    <property type="match status" value="1"/>
</dbReference>
<dbReference type="PROSITE" id="PS50850">
    <property type="entry name" value="MFS"/>
    <property type="match status" value="1"/>
</dbReference>
<sequence>MQLEPAHLVYAAFWTFGLVNNVLYVVILTAAVDLVGPQTPKAVVLLADVLPSFLIKLAAPFFIHKIPYNRRITLLVGLSTVGMMSVSLASPLFLKLVGVVLASFSSGLGEVTFLQLTHFYDTRALNGWSSGTGGAGLVGSGLFMLLTTVLGVSVKTSLLVFAFFPLAFLGVYFYLLPPRDYNRVPGAFPVHSNDPETGIETQPITWEFVASGYETTMVRLKPLVMPYMLPLFLVYFSEYTINQGVAPTLLFPMEELPFSKFRDVYVTYGTLYQLGVFISRSSAPFVRIRRIMIPSVLQFANLVFCIAQSMSPILPNVWLVFILIFYEGLLGGAAYVNTFLLITEQADLAEREFALGSVGMSDSAGIVLAGLVSLWLEPGLCNYQVNDGRGWCTLE</sequence>
<accession>Q6BZW3</accession>
<feature type="signal peptide" evidence="2">
    <location>
        <begin position="1"/>
        <end position="31"/>
    </location>
</feature>
<feature type="chain" id="PRO_0000256266" description="Protein BTN1">
    <location>
        <begin position="32"/>
        <end position="395"/>
    </location>
</feature>
<feature type="transmembrane region" description="Helical" evidence="2">
    <location>
        <begin position="43"/>
        <end position="63"/>
    </location>
</feature>
<feature type="transmembrane region" description="Helical" evidence="2">
    <location>
        <begin position="74"/>
        <end position="94"/>
    </location>
</feature>
<feature type="transmembrane region" description="Helical" evidence="2">
    <location>
        <begin position="96"/>
        <end position="116"/>
    </location>
</feature>
<feature type="transmembrane region" description="Helical" evidence="2">
    <location>
        <begin position="134"/>
        <end position="154"/>
    </location>
</feature>
<feature type="transmembrane region" description="Helical" evidence="2">
    <location>
        <begin position="158"/>
        <end position="178"/>
    </location>
</feature>
<feature type="transmembrane region" description="Helical" evidence="2">
    <location>
        <begin position="222"/>
        <end position="242"/>
    </location>
</feature>
<feature type="transmembrane region" description="Helical" evidence="2">
    <location>
        <begin position="261"/>
        <end position="278"/>
    </location>
</feature>
<feature type="transmembrane region" description="Helical" evidence="2">
    <location>
        <begin position="291"/>
        <end position="311"/>
    </location>
</feature>
<feature type="transmembrane region" description="Helical" evidence="2">
    <location>
        <begin position="313"/>
        <end position="333"/>
    </location>
</feature>
<feature type="transmembrane region" description="Helical" evidence="2">
    <location>
        <begin position="355"/>
        <end position="375"/>
    </location>
</feature>
<proteinExistence type="inferred from homology"/>
<comment type="function">
    <text evidence="1">Involved in vacuolar transport and vacuole pH homeostasis. Also required for cytokinesis (By similarity).</text>
</comment>
<comment type="subcellular location">
    <subcellularLocation>
        <location evidence="1">Vacuole membrane</location>
        <topology evidence="1">Multi-pass membrane protein</topology>
    </subcellularLocation>
</comment>
<comment type="similarity">
    <text evidence="3">Belongs to the battenin family.</text>
</comment>
<keyword id="KW-0029">Amino-acid transport</keyword>
<keyword id="KW-0472">Membrane</keyword>
<keyword id="KW-1185">Reference proteome</keyword>
<keyword id="KW-0732">Signal</keyword>
<keyword id="KW-0812">Transmembrane</keyword>
<keyword id="KW-1133">Transmembrane helix</keyword>
<keyword id="KW-0813">Transport</keyword>
<keyword id="KW-0926">Vacuole</keyword>
<protein>
    <recommendedName>
        <fullName>Protein BTN1</fullName>
    </recommendedName>
</protein>
<name>BTN1_YARLI</name>
<reference key="1">
    <citation type="journal article" date="2004" name="Nature">
        <title>Genome evolution in yeasts.</title>
        <authorList>
            <person name="Dujon B."/>
            <person name="Sherman D."/>
            <person name="Fischer G."/>
            <person name="Durrens P."/>
            <person name="Casaregola S."/>
            <person name="Lafontaine I."/>
            <person name="de Montigny J."/>
            <person name="Marck C."/>
            <person name="Neuveglise C."/>
            <person name="Talla E."/>
            <person name="Goffard N."/>
            <person name="Frangeul L."/>
            <person name="Aigle M."/>
            <person name="Anthouard V."/>
            <person name="Babour A."/>
            <person name="Barbe V."/>
            <person name="Barnay S."/>
            <person name="Blanchin S."/>
            <person name="Beckerich J.-M."/>
            <person name="Beyne E."/>
            <person name="Bleykasten C."/>
            <person name="Boisrame A."/>
            <person name="Boyer J."/>
            <person name="Cattolico L."/>
            <person name="Confanioleri F."/>
            <person name="de Daruvar A."/>
            <person name="Despons L."/>
            <person name="Fabre E."/>
            <person name="Fairhead C."/>
            <person name="Ferry-Dumazet H."/>
            <person name="Groppi A."/>
            <person name="Hantraye F."/>
            <person name="Hennequin C."/>
            <person name="Jauniaux N."/>
            <person name="Joyet P."/>
            <person name="Kachouri R."/>
            <person name="Kerrest A."/>
            <person name="Koszul R."/>
            <person name="Lemaire M."/>
            <person name="Lesur I."/>
            <person name="Ma L."/>
            <person name="Muller H."/>
            <person name="Nicaud J.-M."/>
            <person name="Nikolski M."/>
            <person name="Oztas S."/>
            <person name="Ozier-Kalogeropoulos O."/>
            <person name="Pellenz S."/>
            <person name="Potier S."/>
            <person name="Richard G.-F."/>
            <person name="Straub M.-L."/>
            <person name="Suleau A."/>
            <person name="Swennen D."/>
            <person name="Tekaia F."/>
            <person name="Wesolowski-Louvel M."/>
            <person name="Westhof E."/>
            <person name="Wirth B."/>
            <person name="Zeniou-Meyer M."/>
            <person name="Zivanovic Y."/>
            <person name="Bolotin-Fukuhara M."/>
            <person name="Thierry A."/>
            <person name="Bouchier C."/>
            <person name="Caudron B."/>
            <person name="Scarpelli C."/>
            <person name="Gaillardin C."/>
            <person name="Weissenbach J."/>
            <person name="Wincker P."/>
            <person name="Souciet J.-L."/>
        </authorList>
    </citation>
    <scope>NUCLEOTIDE SEQUENCE [LARGE SCALE GENOMIC DNA]</scope>
    <source>
        <strain>CLIB 122 / E 150</strain>
    </source>
</reference>
<evidence type="ECO:0000250" key="1"/>
<evidence type="ECO:0000255" key="2"/>
<evidence type="ECO:0000305" key="3"/>
<gene>
    <name type="primary">BTN1</name>
    <name type="ordered locus">YALI0F30415g</name>
</gene>
<organism>
    <name type="scientific">Yarrowia lipolytica (strain CLIB 122 / E 150)</name>
    <name type="common">Yeast</name>
    <name type="synonym">Candida lipolytica</name>
    <dbReference type="NCBI Taxonomy" id="284591"/>
    <lineage>
        <taxon>Eukaryota</taxon>
        <taxon>Fungi</taxon>
        <taxon>Dikarya</taxon>
        <taxon>Ascomycota</taxon>
        <taxon>Saccharomycotina</taxon>
        <taxon>Dipodascomycetes</taxon>
        <taxon>Dipodascales</taxon>
        <taxon>Dipodascales incertae sedis</taxon>
        <taxon>Yarrowia</taxon>
    </lineage>
</organism>